<organism>
    <name type="scientific">Arabidopsis thaliana</name>
    <name type="common">Mouse-ear cress</name>
    <dbReference type="NCBI Taxonomy" id="3702"/>
    <lineage>
        <taxon>Eukaryota</taxon>
        <taxon>Viridiplantae</taxon>
        <taxon>Streptophyta</taxon>
        <taxon>Embryophyta</taxon>
        <taxon>Tracheophyta</taxon>
        <taxon>Spermatophyta</taxon>
        <taxon>Magnoliopsida</taxon>
        <taxon>eudicotyledons</taxon>
        <taxon>Gunneridae</taxon>
        <taxon>Pentapetalae</taxon>
        <taxon>rosids</taxon>
        <taxon>malvids</taxon>
        <taxon>Brassicales</taxon>
        <taxon>Brassicaceae</taxon>
        <taxon>Camelineae</taxon>
        <taxon>Arabidopsis</taxon>
    </lineage>
</organism>
<name>FBL13_ARATH</name>
<feature type="chain" id="PRO_0000272253" description="F-box/LRR-repeat protein 13">
    <location>
        <begin position="1"/>
        <end position="451"/>
    </location>
</feature>
<feature type="domain" description="F-box" evidence="1">
    <location>
        <begin position="17"/>
        <end position="70"/>
    </location>
</feature>
<feature type="repeat" description="LRR 1">
    <location>
        <begin position="128"/>
        <end position="155"/>
    </location>
</feature>
<feature type="repeat" description="LRR 2">
    <location>
        <begin position="177"/>
        <end position="202"/>
    </location>
</feature>
<feature type="repeat" description="LRR 3">
    <location>
        <begin position="224"/>
        <end position="251"/>
    </location>
</feature>
<feature type="repeat" description="LRR 4">
    <location>
        <begin position="335"/>
        <end position="363"/>
    </location>
</feature>
<feature type="domain" description="FBD">
    <location>
        <begin position="370"/>
        <end position="421"/>
    </location>
</feature>
<protein>
    <recommendedName>
        <fullName>F-box/LRR-repeat protein 13</fullName>
    </recommendedName>
</protein>
<accession>Q9FWZ1</accession>
<evidence type="ECO:0000255" key="1">
    <source>
        <dbReference type="PROSITE-ProRule" id="PRU00080"/>
    </source>
</evidence>
<keyword id="KW-0433">Leucine-rich repeat</keyword>
<keyword id="KW-1185">Reference proteome</keyword>
<keyword id="KW-0677">Repeat</keyword>
<dbReference type="EMBL" id="AC013289">
    <property type="protein sequence ID" value="AAG52534.1"/>
    <property type="molecule type" value="Genomic_DNA"/>
</dbReference>
<dbReference type="EMBL" id="AC021046">
    <property type="protein sequence ID" value="AAG12704.1"/>
    <property type="molecule type" value="Genomic_DNA"/>
</dbReference>
<dbReference type="EMBL" id="CP002684">
    <property type="protein sequence ID" value="AEE34957.1"/>
    <property type="molecule type" value="Genomic_DNA"/>
</dbReference>
<dbReference type="EMBL" id="DQ446414">
    <property type="protein sequence ID" value="ABE65758.1"/>
    <property type="molecule type" value="mRNA"/>
</dbReference>
<dbReference type="PIR" id="A96718">
    <property type="entry name" value="A96718"/>
</dbReference>
<dbReference type="RefSeq" id="NP_177121.1">
    <property type="nucleotide sequence ID" value="NM_105631.2"/>
</dbReference>
<dbReference type="BioGRID" id="28520">
    <property type="interactions" value="2"/>
</dbReference>
<dbReference type="FunCoup" id="Q9FWZ1">
    <property type="interactions" value="5"/>
</dbReference>
<dbReference type="STRING" id="3702.Q9FWZ1"/>
<dbReference type="PaxDb" id="3702-AT1G69630.1"/>
<dbReference type="EnsemblPlants" id="AT1G69630.1">
    <property type="protein sequence ID" value="AT1G69630.1"/>
    <property type="gene ID" value="AT1G69630"/>
</dbReference>
<dbReference type="GeneID" id="843299"/>
<dbReference type="Gramene" id="AT1G69630.1">
    <property type="protein sequence ID" value="AT1G69630.1"/>
    <property type="gene ID" value="AT1G69630"/>
</dbReference>
<dbReference type="KEGG" id="ath:AT1G69630"/>
<dbReference type="Araport" id="AT1G69630"/>
<dbReference type="TAIR" id="AT1G69630"/>
<dbReference type="eggNOG" id="ENOG502SVTR">
    <property type="taxonomic scope" value="Eukaryota"/>
</dbReference>
<dbReference type="HOGENOM" id="CLU_010721_1_3_1"/>
<dbReference type="InParanoid" id="Q9FWZ1"/>
<dbReference type="OMA" id="VEGWICT"/>
<dbReference type="PhylomeDB" id="Q9FWZ1"/>
<dbReference type="PRO" id="PR:Q9FWZ1"/>
<dbReference type="Proteomes" id="UP000006548">
    <property type="component" value="Chromosome 1"/>
</dbReference>
<dbReference type="ExpressionAtlas" id="Q9FWZ1">
    <property type="expression patterns" value="baseline and differential"/>
</dbReference>
<dbReference type="CDD" id="cd22160">
    <property type="entry name" value="F-box_AtFBL13-like"/>
    <property type="match status" value="1"/>
</dbReference>
<dbReference type="Gene3D" id="1.20.1280.50">
    <property type="match status" value="1"/>
</dbReference>
<dbReference type="Gene3D" id="3.80.10.10">
    <property type="entry name" value="Ribonuclease Inhibitor"/>
    <property type="match status" value="1"/>
</dbReference>
<dbReference type="InterPro" id="IPR036047">
    <property type="entry name" value="F-box-like_dom_sf"/>
</dbReference>
<dbReference type="InterPro" id="IPR053781">
    <property type="entry name" value="F-box_AtFBL13-like"/>
</dbReference>
<dbReference type="InterPro" id="IPR001810">
    <property type="entry name" value="F-box_dom"/>
</dbReference>
<dbReference type="InterPro" id="IPR006566">
    <property type="entry name" value="FBD"/>
</dbReference>
<dbReference type="InterPro" id="IPR050232">
    <property type="entry name" value="FBL13/AtMIF1-like"/>
</dbReference>
<dbReference type="InterPro" id="IPR032675">
    <property type="entry name" value="LRR_dom_sf"/>
</dbReference>
<dbReference type="InterPro" id="IPR055411">
    <property type="entry name" value="LRR_FXL15/At3g58940/PEG3-like"/>
</dbReference>
<dbReference type="PANTHER" id="PTHR31900">
    <property type="entry name" value="F-BOX/RNI SUPERFAMILY PROTEIN-RELATED"/>
    <property type="match status" value="1"/>
</dbReference>
<dbReference type="PANTHER" id="PTHR31900:SF33">
    <property type="entry name" value="PROTEIN WITH RNI-LIKE_FBD-LIKE DOMAIN"/>
    <property type="match status" value="1"/>
</dbReference>
<dbReference type="Pfam" id="PF00646">
    <property type="entry name" value="F-box"/>
    <property type="match status" value="1"/>
</dbReference>
<dbReference type="Pfam" id="PF08387">
    <property type="entry name" value="FBD"/>
    <property type="match status" value="1"/>
</dbReference>
<dbReference type="Pfam" id="PF24758">
    <property type="entry name" value="LRR_At5g56370"/>
    <property type="match status" value="1"/>
</dbReference>
<dbReference type="SMART" id="SM00579">
    <property type="entry name" value="FBD"/>
    <property type="match status" value="1"/>
</dbReference>
<dbReference type="SMART" id="SM00256">
    <property type="entry name" value="FBOX"/>
    <property type="match status" value="1"/>
</dbReference>
<dbReference type="SUPFAM" id="SSF81383">
    <property type="entry name" value="F-box domain"/>
    <property type="match status" value="1"/>
</dbReference>
<dbReference type="SUPFAM" id="SSF52047">
    <property type="entry name" value="RNI-like"/>
    <property type="match status" value="1"/>
</dbReference>
<dbReference type="PROSITE" id="PS50181">
    <property type="entry name" value="FBOX"/>
    <property type="match status" value="1"/>
</dbReference>
<sequence length="451" mass="51718">MDEDREKHVRAKGSDEVDWISKLPDCLLCEVLLNLPTKDVVKTSVLSRRWRNLWKHVPGLDLDNTDFQEFNTFLSFVDSFLDFNSESFLQKFILKYDCDDEYDPDIFLIGRWINTIVTRKVQHIDVLDDSYGSWEVQLPSSIYTCESLVSLKLCGLTLASPEFVSLPSLKVMDLIITKFADDMGLETLITKCPVLESLTIERSFCDEIEVLRVRSQSLLRFTHVADSDEGVVEDLVVSIDAPKLEYLRLSDHRVASFILNKPGKLVKADIDIVFNLSSVNKFNPDDLPKRTMIRNFLLGISTIKDMIIFSSTLEVIYDFSRCERLPLFRNLSVLCVEFYGYMWEMLPIFLESCPNLKTLVVKSASYQEKGENIILPGPRRFLSSLEYVKIERPLKGEAMEMKLVSYLLENSTILKKLTLCLDDSVKKEDSVILKELLAIPRLSTSSKVVVL</sequence>
<gene>
    <name type="primary">FBL13</name>
    <name type="ordered locus">At1g69630</name>
    <name type="ORF">F24J1.28</name>
    <name type="ORF">T6C23.17</name>
</gene>
<proteinExistence type="evidence at transcript level"/>
<reference key="1">
    <citation type="journal article" date="2000" name="Nature">
        <title>Sequence and analysis of chromosome 1 of the plant Arabidopsis thaliana.</title>
        <authorList>
            <person name="Theologis A."/>
            <person name="Ecker J.R."/>
            <person name="Palm C.J."/>
            <person name="Federspiel N.A."/>
            <person name="Kaul S."/>
            <person name="White O."/>
            <person name="Alonso J."/>
            <person name="Altafi H."/>
            <person name="Araujo R."/>
            <person name="Bowman C.L."/>
            <person name="Brooks S.Y."/>
            <person name="Buehler E."/>
            <person name="Chan A."/>
            <person name="Chao Q."/>
            <person name="Chen H."/>
            <person name="Cheuk R.F."/>
            <person name="Chin C.W."/>
            <person name="Chung M.K."/>
            <person name="Conn L."/>
            <person name="Conway A.B."/>
            <person name="Conway A.R."/>
            <person name="Creasy T.H."/>
            <person name="Dewar K."/>
            <person name="Dunn P."/>
            <person name="Etgu P."/>
            <person name="Feldblyum T.V."/>
            <person name="Feng J.-D."/>
            <person name="Fong B."/>
            <person name="Fujii C.Y."/>
            <person name="Gill J.E."/>
            <person name="Goldsmith A.D."/>
            <person name="Haas B."/>
            <person name="Hansen N.F."/>
            <person name="Hughes B."/>
            <person name="Huizar L."/>
            <person name="Hunter J.L."/>
            <person name="Jenkins J."/>
            <person name="Johnson-Hopson C."/>
            <person name="Khan S."/>
            <person name="Khaykin E."/>
            <person name="Kim C.J."/>
            <person name="Koo H.L."/>
            <person name="Kremenetskaia I."/>
            <person name="Kurtz D.B."/>
            <person name="Kwan A."/>
            <person name="Lam B."/>
            <person name="Langin-Hooper S."/>
            <person name="Lee A."/>
            <person name="Lee J.M."/>
            <person name="Lenz C.A."/>
            <person name="Li J.H."/>
            <person name="Li Y.-P."/>
            <person name="Lin X."/>
            <person name="Liu S.X."/>
            <person name="Liu Z.A."/>
            <person name="Luros J.S."/>
            <person name="Maiti R."/>
            <person name="Marziali A."/>
            <person name="Militscher J."/>
            <person name="Miranda M."/>
            <person name="Nguyen M."/>
            <person name="Nierman W.C."/>
            <person name="Osborne B.I."/>
            <person name="Pai G."/>
            <person name="Peterson J."/>
            <person name="Pham P.K."/>
            <person name="Rizzo M."/>
            <person name="Rooney T."/>
            <person name="Rowley D."/>
            <person name="Sakano H."/>
            <person name="Salzberg S.L."/>
            <person name="Schwartz J.R."/>
            <person name="Shinn P."/>
            <person name="Southwick A.M."/>
            <person name="Sun H."/>
            <person name="Tallon L.J."/>
            <person name="Tambunga G."/>
            <person name="Toriumi M.J."/>
            <person name="Town C.D."/>
            <person name="Utterback T."/>
            <person name="Van Aken S."/>
            <person name="Vaysberg M."/>
            <person name="Vysotskaia V.S."/>
            <person name="Walker M."/>
            <person name="Wu D."/>
            <person name="Yu G."/>
            <person name="Fraser C.M."/>
            <person name="Venter J.C."/>
            <person name="Davis R.W."/>
        </authorList>
    </citation>
    <scope>NUCLEOTIDE SEQUENCE [LARGE SCALE GENOMIC DNA]</scope>
    <source>
        <strain>cv. Columbia</strain>
    </source>
</reference>
<reference key="2">
    <citation type="journal article" date="2017" name="Plant J.">
        <title>Araport11: a complete reannotation of the Arabidopsis thaliana reference genome.</title>
        <authorList>
            <person name="Cheng C.Y."/>
            <person name="Krishnakumar V."/>
            <person name="Chan A.P."/>
            <person name="Thibaud-Nissen F."/>
            <person name="Schobel S."/>
            <person name="Town C.D."/>
        </authorList>
    </citation>
    <scope>GENOME REANNOTATION</scope>
    <source>
        <strain>cv. Columbia</strain>
    </source>
</reference>
<reference key="3">
    <citation type="journal article" date="2006" name="Plant Biotechnol. J.">
        <title>Simultaneous high-throughput recombinational cloning of open reading frames in closed and open configurations.</title>
        <authorList>
            <person name="Underwood B.A."/>
            <person name="Vanderhaeghen R."/>
            <person name="Whitford R."/>
            <person name="Town C.D."/>
            <person name="Hilson P."/>
        </authorList>
    </citation>
    <scope>NUCLEOTIDE SEQUENCE [LARGE SCALE MRNA]</scope>
    <source>
        <strain>cv. Columbia</strain>
    </source>
</reference>
<reference key="4">
    <citation type="journal article" date="2000" name="Trends Plant Sci.">
        <title>F-box proteins in Arabidopsis.</title>
        <authorList>
            <person name="Xiao W."/>
            <person name="Jang J.-C."/>
        </authorList>
    </citation>
    <scope>GENE FAMILY</scope>
    <scope>NOMENCLATURE</scope>
</reference>